<protein>
    <recommendedName>
        <fullName evidence="1">Valine--tRNA ligase</fullName>
        <ecNumber evidence="1">6.1.1.9</ecNumber>
    </recommendedName>
    <alternativeName>
        <fullName evidence="1">Valyl-tRNA synthetase</fullName>
        <shortName evidence="1">ValRS</shortName>
    </alternativeName>
</protein>
<sequence length="876" mass="101725">MEMKPKYDPREVEAGRYEEWVKNGYFKPSEDKSKETYTIVIPPPNVTGKLHLGHAWDTTLQDIITRMKRMQGYDTLYLPGMDHAGIATQAKVEAKLNEKGITRYDLGREKFLEQAWDWKEEYASFIRAQWAKLGLGLDYSRERFTLDEGLSKAVKKVFVDLYNKGIIYRGERIINWDPKARTALSDIEVIHEDVQGAFYHFKYPYADGEGFIEIATTRPETMLGDTAIVVNPNDERYKDVIGKTVILPIVGRELPILADEYVDIDFGSGAMKVTPAHDLNDFEIGQRHQLENIIVMDENGKMNDKAGKYEGMDRFDCRKQLVEDLKEQDLVIKIEDHVHSVGHSERSGAVVEPYLSTQWFVRMEDLAKRSLDNQKTDDRIDFYPQRFEHTFNQWMENIRDWTISRQLWWGHQIPAWYHKETGEIYVGEEAPTDIENWQQDEDVLDTWFSSALWPFSTLGWPDLESEDFKRYYPTNALVTGYDIIFFWVARMIFQGLEFTDRRPFNDVLLHGLVRAEDGRKMSKSLGNGVDPMDVIDEYGADSLRYFLATGSSPGHDLRYSTEKVESVWNFINKIWNGARFSLMNIGEDFKVEDIDLSGNLSLADKWILTRLNETIATVTDLSDKYEFGEVGRALYNFIWDDFCDWYIEMSKIPMNGNDEEQKQITRSVLSYTLDNIMRMLHPFMPFVTEKIWQSLPHEGDTIVKASWPEVRESLIFEESKQTMQQLVEIIKSVRQSRVEVNTPLSKEIPILIQAKDKEIETTLSQNKDYLIKFCNPSTLNISTDVEIPEKAMTSVVIAGKVVLPLEGLIDMDKEISRLEKELAKLQSELDRVDKKLSNENFVSKAPEKVINEEKRKKQDYQEKYDGVKARIEQLKA</sequence>
<evidence type="ECO:0000255" key="1">
    <source>
        <dbReference type="HAMAP-Rule" id="MF_02004"/>
    </source>
</evidence>
<gene>
    <name evidence="1" type="primary">valS</name>
    <name type="ordered locus">SAB1524c</name>
</gene>
<proteinExistence type="inferred from homology"/>
<reference key="1">
    <citation type="journal article" date="2007" name="PLoS ONE">
        <title>Molecular correlates of host specialization in Staphylococcus aureus.</title>
        <authorList>
            <person name="Herron-Olson L."/>
            <person name="Fitzgerald J.R."/>
            <person name="Musser J.M."/>
            <person name="Kapur V."/>
        </authorList>
    </citation>
    <scope>NUCLEOTIDE SEQUENCE [LARGE SCALE GENOMIC DNA]</scope>
    <source>
        <strain>bovine RF122 / ET3-1</strain>
    </source>
</reference>
<feature type="chain" id="PRO_1000022179" description="Valine--tRNA ligase">
    <location>
        <begin position="1"/>
        <end position="876"/>
    </location>
</feature>
<feature type="coiled-coil region" evidence="1">
    <location>
        <begin position="805"/>
        <end position="876"/>
    </location>
</feature>
<feature type="short sequence motif" description="'HIGH' region">
    <location>
        <begin position="44"/>
        <end position="54"/>
    </location>
</feature>
<feature type="short sequence motif" description="'KMSKS' region">
    <location>
        <begin position="520"/>
        <end position="524"/>
    </location>
</feature>
<feature type="binding site" evidence="1">
    <location>
        <position position="523"/>
    </location>
    <ligand>
        <name>ATP</name>
        <dbReference type="ChEBI" id="CHEBI:30616"/>
    </ligand>
</feature>
<accession>Q2YTA0</accession>
<comment type="function">
    <text evidence="1">Catalyzes the attachment of valine to tRNA(Val). As ValRS can inadvertently accommodate and process structurally similar amino acids such as threonine, to avoid such errors, it has a 'posttransfer' editing activity that hydrolyzes mischarged Thr-tRNA(Val) in a tRNA-dependent manner.</text>
</comment>
<comment type="catalytic activity">
    <reaction evidence="1">
        <text>tRNA(Val) + L-valine + ATP = L-valyl-tRNA(Val) + AMP + diphosphate</text>
        <dbReference type="Rhea" id="RHEA:10704"/>
        <dbReference type="Rhea" id="RHEA-COMP:9672"/>
        <dbReference type="Rhea" id="RHEA-COMP:9708"/>
        <dbReference type="ChEBI" id="CHEBI:30616"/>
        <dbReference type="ChEBI" id="CHEBI:33019"/>
        <dbReference type="ChEBI" id="CHEBI:57762"/>
        <dbReference type="ChEBI" id="CHEBI:78442"/>
        <dbReference type="ChEBI" id="CHEBI:78537"/>
        <dbReference type="ChEBI" id="CHEBI:456215"/>
        <dbReference type="EC" id="6.1.1.9"/>
    </reaction>
</comment>
<comment type="subunit">
    <text evidence="1">Monomer.</text>
</comment>
<comment type="subcellular location">
    <subcellularLocation>
        <location evidence="1">Cytoplasm</location>
    </subcellularLocation>
</comment>
<comment type="domain">
    <text evidence="1">ValRS has two distinct active sites: one for aminoacylation and one for editing. The misactivated threonine is translocated from the active site to the editing site.</text>
</comment>
<comment type="domain">
    <text evidence="1">The C-terminal coiled-coil domain is crucial for aminoacylation activity.</text>
</comment>
<comment type="similarity">
    <text evidence="1">Belongs to the class-I aminoacyl-tRNA synthetase family. ValS type 1 subfamily.</text>
</comment>
<name>SYV_STAAB</name>
<dbReference type="EC" id="6.1.1.9" evidence="1"/>
<dbReference type="EMBL" id="AJ938182">
    <property type="protein sequence ID" value="CAI81213.1"/>
    <property type="molecule type" value="Genomic_DNA"/>
</dbReference>
<dbReference type="RefSeq" id="WP_000425339.1">
    <property type="nucleotide sequence ID" value="NC_007622.1"/>
</dbReference>
<dbReference type="SMR" id="Q2YTA0"/>
<dbReference type="KEGG" id="sab:SAB1524c"/>
<dbReference type="HOGENOM" id="CLU_001493_0_2_9"/>
<dbReference type="GO" id="GO:0005829">
    <property type="term" value="C:cytosol"/>
    <property type="evidence" value="ECO:0007669"/>
    <property type="project" value="TreeGrafter"/>
</dbReference>
<dbReference type="GO" id="GO:0002161">
    <property type="term" value="F:aminoacyl-tRNA deacylase activity"/>
    <property type="evidence" value="ECO:0007669"/>
    <property type="project" value="InterPro"/>
</dbReference>
<dbReference type="GO" id="GO:0005524">
    <property type="term" value="F:ATP binding"/>
    <property type="evidence" value="ECO:0007669"/>
    <property type="project" value="UniProtKB-UniRule"/>
</dbReference>
<dbReference type="GO" id="GO:0004832">
    <property type="term" value="F:valine-tRNA ligase activity"/>
    <property type="evidence" value="ECO:0007669"/>
    <property type="project" value="UniProtKB-UniRule"/>
</dbReference>
<dbReference type="GO" id="GO:0006438">
    <property type="term" value="P:valyl-tRNA aminoacylation"/>
    <property type="evidence" value="ECO:0007669"/>
    <property type="project" value="UniProtKB-UniRule"/>
</dbReference>
<dbReference type="CDD" id="cd07962">
    <property type="entry name" value="Anticodon_Ia_Val"/>
    <property type="match status" value="1"/>
</dbReference>
<dbReference type="CDD" id="cd00817">
    <property type="entry name" value="ValRS_core"/>
    <property type="match status" value="1"/>
</dbReference>
<dbReference type="FunFam" id="1.10.287.380:FF:000001">
    <property type="entry name" value="Valine--tRNA ligase"/>
    <property type="match status" value="1"/>
</dbReference>
<dbReference type="FunFam" id="1.10.730.10:FF:000014">
    <property type="entry name" value="Valine--tRNA ligase"/>
    <property type="match status" value="1"/>
</dbReference>
<dbReference type="FunFam" id="3.40.50.620:FF:000032">
    <property type="entry name" value="Valine--tRNA ligase"/>
    <property type="match status" value="1"/>
</dbReference>
<dbReference type="FunFam" id="3.40.50.620:FF:000098">
    <property type="entry name" value="Valine--tRNA ligase"/>
    <property type="match status" value="1"/>
</dbReference>
<dbReference type="FunFam" id="3.90.740.10:FF:000005">
    <property type="entry name" value="Valine--tRNA ligase, mitochondrial"/>
    <property type="match status" value="1"/>
</dbReference>
<dbReference type="Gene3D" id="3.40.50.620">
    <property type="entry name" value="HUPs"/>
    <property type="match status" value="2"/>
</dbReference>
<dbReference type="Gene3D" id="1.10.730.10">
    <property type="entry name" value="Isoleucyl-tRNA Synthetase, Domain 1"/>
    <property type="match status" value="1"/>
</dbReference>
<dbReference type="Gene3D" id="1.10.287.380">
    <property type="entry name" value="Valyl-tRNA synthetase, C-terminal domain"/>
    <property type="match status" value="1"/>
</dbReference>
<dbReference type="Gene3D" id="3.90.740.10">
    <property type="entry name" value="Valyl/Leucyl/Isoleucyl-tRNA synthetase, editing domain"/>
    <property type="match status" value="1"/>
</dbReference>
<dbReference type="HAMAP" id="MF_02004">
    <property type="entry name" value="Val_tRNA_synth_type1"/>
    <property type="match status" value="1"/>
</dbReference>
<dbReference type="InterPro" id="IPR001412">
    <property type="entry name" value="aa-tRNA-synth_I_CS"/>
</dbReference>
<dbReference type="InterPro" id="IPR002300">
    <property type="entry name" value="aa-tRNA-synth_Ia"/>
</dbReference>
<dbReference type="InterPro" id="IPR033705">
    <property type="entry name" value="Anticodon_Ia_Val"/>
</dbReference>
<dbReference type="InterPro" id="IPR013155">
    <property type="entry name" value="M/V/L/I-tRNA-synth_anticd-bd"/>
</dbReference>
<dbReference type="InterPro" id="IPR014729">
    <property type="entry name" value="Rossmann-like_a/b/a_fold"/>
</dbReference>
<dbReference type="InterPro" id="IPR010978">
    <property type="entry name" value="tRNA-bd_arm"/>
</dbReference>
<dbReference type="InterPro" id="IPR009080">
    <property type="entry name" value="tRNAsynth_Ia_anticodon-bd"/>
</dbReference>
<dbReference type="InterPro" id="IPR037118">
    <property type="entry name" value="Val-tRNA_synth_C_sf"/>
</dbReference>
<dbReference type="InterPro" id="IPR019499">
    <property type="entry name" value="Val-tRNA_synth_tRNA-bd"/>
</dbReference>
<dbReference type="InterPro" id="IPR009008">
    <property type="entry name" value="Val/Leu/Ile-tRNA-synth_edit"/>
</dbReference>
<dbReference type="InterPro" id="IPR002303">
    <property type="entry name" value="Valyl-tRNA_ligase"/>
</dbReference>
<dbReference type="NCBIfam" id="NF004349">
    <property type="entry name" value="PRK05729.1"/>
    <property type="match status" value="1"/>
</dbReference>
<dbReference type="NCBIfam" id="TIGR00422">
    <property type="entry name" value="valS"/>
    <property type="match status" value="1"/>
</dbReference>
<dbReference type="PANTHER" id="PTHR11946:SF93">
    <property type="entry name" value="VALINE--TRNA LIGASE, CHLOROPLASTIC_MITOCHONDRIAL 2"/>
    <property type="match status" value="1"/>
</dbReference>
<dbReference type="PANTHER" id="PTHR11946">
    <property type="entry name" value="VALYL-TRNA SYNTHETASES"/>
    <property type="match status" value="1"/>
</dbReference>
<dbReference type="Pfam" id="PF08264">
    <property type="entry name" value="Anticodon_1"/>
    <property type="match status" value="1"/>
</dbReference>
<dbReference type="Pfam" id="PF00133">
    <property type="entry name" value="tRNA-synt_1"/>
    <property type="match status" value="1"/>
</dbReference>
<dbReference type="Pfam" id="PF10458">
    <property type="entry name" value="Val_tRNA-synt_C"/>
    <property type="match status" value="1"/>
</dbReference>
<dbReference type="PRINTS" id="PR00986">
    <property type="entry name" value="TRNASYNTHVAL"/>
</dbReference>
<dbReference type="SUPFAM" id="SSF47323">
    <property type="entry name" value="Anticodon-binding domain of a subclass of class I aminoacyl-tRNA synthetases"/>
    <property type="match status" value="1"/>
</dbReference>
<dbReference type="SUPFAM" id="SSF52374">
    <property type="entry name" value="Nucleotidylyl transferase"/>
    <property type="match status" value="1"/>
</dbReference>
<dbReference type="SUPFAM" id="SSF46589">
    <property type="entry name" value="tRNA-binding arm"/>
    <property type="match status" value="1"/>
</dbReference>
<dbReference type="SUPFAM" id="SSF50677">
    <property type="entry name" value="ValRS/IleRS/LeuRS editing domain"/>
    <property type="match status" value="1"/>
</dbReference>
<dbReference type="PROSITE" id="PS00178">
    <property type="entry name" value="AA_TRNA_LIGASE_I"/>
    <property type="match status" value="1"/>
</dbReference>
<keyword id="KW-0030">Aminoacyl-tRNA synthetase</keyword>
<keyword id="KW-0067">ATP-binding</keyword>
<keyword id="KW-0175">Coiled coil</keyword>
<keyword id="KW-0963">Cytoplasm</keyword>
<keyword id="KW-0436">Ligase</keyword>
<keyword id="KW-0547">Nucleotide-binding</keyword>
<keyword id="KW-0648">Protein biosynthesis</keyword>
<organism>
    <name type="scientific">Staphylococcus aureus (strain bovine RF122 / ET3-1)</name>
    <dbReference type="NCBI Taxonomy" id="273036"/>
    <lineage>
        <taxon>Bacteria</taxon>
        <taxon>Bacillati</taxon>
        <taxon>Bacillota</taxon>
        <taxon>Bacilli</taxon>
        <taxon>Bacillales</taxon>
        <taxon>Staphylococcaceae</taxon>
        <taxon>Staphylococcus</taxon>
    </lineage>
</organism>